<comment type="function">
    <text evidence="1">Catalyzes the transfer of the terminal amino group of L-lysine to alpha-ketoglutarate to yield L-glutamate and 2-aminoadipate 6-semialdehyde ((S)-2-amino-6-oxohexanoate), which is spontaneously converted to the dehydrated form 1-piperideine 6-carboxylate.</text>
</comment>
<comment type="catalytic activity">
    <reaction evidence="1">
        <text>L-lysine + 2-oxoglutarate = (S)-2-amino-6-oxohexanoate + L-glutamate</text>
        <dbReference type="Rhea" id="RHEA:21200"/>
        <dbReference type="ChEBI" id="CHEBI:16810"/>
        <dbReference type="ChEBI" id="CHEBI:29985"/>
        <dbReference type="ChEBI" id="CHEBI:32551"/>
        <dbReference type="ChEBI" id="CHEBI:58321"/>
        <dbReference type="EC" id="2.6.1.36"/>
    </reaction>
</comment>
<comment type="cofactor">
    <cofactor evidence="1">
        <name>pyridoxal 5'-phosphate</name>
        <dbReference type="ChEBI" id="CHEBI:597326"/>
    </cofactor>
</comment>
<comment type="similarity">
    <text evidence="2">Belongs to the class-III pyridoxal-phosphate-dependent aminotransferase family.</text>
</comment>
<evidence type="ECO:0000250" key="1">
    <source>
        <dbReference type="UniProtKB" id="P9WQ77"/>
    </source>
</evidence>
<evidence type="ECO:0000305" key="2"/>
<evidence type="ECO:0000312" key="3">
    <source>
        <dbReference type="EMBL" id="AAK47732.1"/>
    </source>
</evidence>
<keyword id="KW-0032">Aminotransferase</keyword>
<keyword id="KW-0663">Pyridoxal phosphate</keyword>
<keyword id="KW-1185">Reference proteome</keyword>
<keyword id="KW-0808">Transferase</keyword>
<accession>P9WQ76</accession>
<accession>L0TF67</accession>
<accession>P63509</accession>
<accession>P96895</accession>
<feature type="chain" id="PRO_0000426824" description="L-lysine-epsilon aminotransferase">
    <location>
        <begin position="1"/>
        <end position="449"/>
    </location>
</feature>
<feature type="binding site" evidence="1">
    <location>
        <position position="128"/>
    </location>
    <ligand>
        <name>pyridoxal 5'-phosphate</name>
        <dbReference type="ChEBI" id="CHEBI:597326"/>
    </ligand>
</feature>
<feature type="binding site" evidence="1">
    <location>
        <position position="129"/>
    </location>
    <ligand>
        <name>pyridoxal 5'-phosphate</name>
        <dbReference type="ChEBI" id="CHEBI:597326"/>
    </ligand>
</feature>
<feature type="binding site" evidence="1">
    <location>
        <position position="170"/>
    </location>
    <ligand>
        <name>2-oxoglutarate</name>
        <dbReference type="ChEBI" id="CHEBI:16810"/>
    </ligand>
</feature>
<feature type="binding site" evidence="1">
    <location>
        <position position="170"/>
    </location>
    <ligand>
        <name>L-lysine</name>
        <dbReference type="ChEBI" id="CHEBI:32551"/>
    </ligand>
</feature>
<feature type="binding site" evidence="1">
    <location>
        <position position="274"/>
    </location>
    <ligand>
        <name>2-oxoglutarate</name>
        <dbReference type="ChEBI" id="CHEBI:16810"/>
    </ligand>
</feature>
<feature type="binding site" evidence="1">
    <location>
        <position position="274"/>
    </location>
    <ligand>
        <name>pyridoxal 5'-phosphate</name>
        <dbReference type="ChEBI" id="CHEBI:597326"/>
    </ligand>
</feature>
<feature type="binding site" evidence="1">
    <location>
        <position position="422"/>
    </location>
    <ligand>
        <name>2-oxoglutarate</name>
        <dbReference type="ChEBI" id="CHEBI:16810"/>
    </ligand>
</feature>
<feature type="modified residue" description="N6-(pyridoxal phosphate)lysine" evidence="1">
    <location>
        <position position="300"/>
    </location>
</feature>
<gene>
    <name evidence="3" type="primary">lat</name>
    <name evidence="3" type="ordered locus">MT3389</name>
</gene>
<dbReference type="EC" id="2.6.1.36" evidence="1"/>
<dbReference type="EMBL" id="AE000516">
    <property type="protein sequence ID" value="AAK47732.1"/>
    <property type="molecule type" value="Genomic_DNA"/>
</dbReference>
<dbReference type="PIR" id="C70981">
    <property type="entry name" value="C70981"/>
</dbReference>
<dbReference type="RefSeq" id="WP_003900004.1">
    <property type="nucleotide sequence ID" value="NZ_KK341227.1"/>
</dbReference>
<dbReference type="SMR" id="P9WQ76"/>
<dbReference type="KEGG" id="mtc:MT3389"/>
<dbReference type="PATRIC" id="fig|83331.31.peg.3647"/>
<dbReference type="HOGENOM" id="CLU_016922_10_1_11"/>
<dbReference type="Proteomes" id="UP000001020">
    <property type="component" value="Chromosome"/>
</dbReference>
<dbReference type="GO" id="GO:0045484">
    <property type="term" value="F:L-lysine 6-transaminase activity"/>
    <property type="evidence" value="ECO:0007669"/>
    <property type="project" value="UniProtKB-EC"/>
</dbReference>
<dbReference type="GO" id="GO:0030170">
    <property type="term" value="F:pyridoxal phosphate binding"/>
    <property type="evidence" value="ECO:0007669"/>
    <property type="project" value="InterPro"/>
</dbReference>
<dbReference type="GO" id="GO:0017000">
    <property type="term" value="P:antibiotic biosynthetic process"/>
    <property type="evidence" value="ECO:0007669"/>
    <property type="project" value="InterPro"/>
</dbReference>
<dbReference type="GO" id="GO:0009450">
    <property type="term" value="P:gamma-aminobutyric acid catabolic process"/>
    <property type="evidence" value="ECO:0007669"/>
    <property type="project" value="TreeGrafter"/>
</dbReference>
<dbReference type="CDD" id="cd00610">
    <property type="entry name" value="OAT_like"/>
    <property type="match status" value="1"/>
</dbReference>
<dbReference type="FunFam" id="3.40.640.10:FF:000073">
    <property type="entry name" value="Probable 4-aminobutyrate aminotransferase"/>
    <property type="match status" value="1"/>
</dbReference>
<dbReference type="Gene3D" id="3.90.1150.10">
    <property type="entry name" value="Aspartate Aminotransferase, domain 1"/>
    <property type="match status" value="1"/>
</dbReference>
<dbReference type="Gene3D" id="3.40.640.10">
    <property type="entry name" value="Type I PLP-dependent aspartate aminotransferase-like (Major domain)"/>
    <property type="match status" value="1"/>
</dbReference>
<dbReference type="InterPro" id="IPR005814">
    <property type="entry name" value="Aminotrans_3"/>
</dbReference>
<dbReference type="InterPro" id="IPR049704">
    <property type="entry name" value="Aminotrans_3_PPA_site"/>
</dbReference>
<dbReference type="InterPro" id="IPR017657">
    <property type="entry name" value="L-lysine_6-transaminase"/>
</dbReference>
<dbReference type="InterPro" id="IPR015424">
    <property type="entry name" value="PyrdxlP-dep_Trfase"/>
</dbReference>
<dbReference type="InterPro" id="IPR015421">
    <property type="entry name" value="PyrdxlP-dep_Trfase_major"/>
</dbReference>
<dbReference type="InterPro" id="IPR015422">
    <property type="entry name" value="PyrdxlP-dep_Trfase_small"/>
</dbReference>
<dbReference type="NCBIfam" id="TIGR03251">
    <property type="entry name" value="LAT_fam"/>
    <property type="match status" value="1"/>
</dbReference>
<dbReference type="PANTHER" id="PTHR43206:SF2">
    <property type="entry name" value="4-AMINOBUTYRATE AMINOTRANSFERASE GABT"/>
    <property type="match status" value="1"/>
</dbReference>
<dbReference type="PANTHER" id="PTHR43206">
    <property type="entry name" value="AMINOTRANSFERASE"/>
    <property type="match status" value="1"/>
</dbReference>
<dbReference type="Pfam" id="PF00202">
    <property type="entry name" value="Aminotran_3"/>
    <property type="match status" value="1"/>
</dbReference>
<dbReference type="PIRSF" id="PIRSF000521">
    <property type="entry name" value="Transaminase_4ab_Lys_Orn"/>
    <property type="match status" value="1"/>
</dbReference>
<dbReference type="SUPFAM" id="SSF53383">
    <property type="entry name" value="PLP-dependent transferases"/>
    <property type="match status" value="1"/>
</dbReference>
<dbReference type="PROSITE" id="PS00600">
    <property type="entry name" value="AA_TRANSFER_CLASS_3"/>
    <property type="match status" value="1"/>
</dbReference>
<reference key="1">
    <citation type="journal article" date="2002" name="J. Bacteriol.">
        <title>Whole-genome comparison of Mycobacterium tuberculosis clinical and laboratory strains.</title>
        <authorList>
            <person name="Fleischmann R.D."/>
            <person name="Alland D."/>
            <person name="Eisen J.A."/>
            <person name="Carpenter L."/>
            <person name="White O."/>
            <person name="Peterson J.D."/>
            <person name="DeBoy R.T."/>
            <person name="Dodson R.J."/>
            <person name="Gwinn M.L."/>
            <person name="Haft D.H."/>
            <person name="Hickey E.K."/>
            <person name="Kolonay J.F."/>
            <person name="Nelson W.C."/>
            <person name="Umayam L.A."/>
            <person name="Ermolaeva M.D."/>
            <person name="Salzberg S.L."/>
            <person name="Delcher A."/>
            <person name="Utterback T.R."/>
            <person name="Weidman J.F."/>
            <person name="Khouri H.M."/>
            <person name="Gill J."/>
            <person name="Mikula A."/>
            <person name="Bishai W."/>
            <person name="Jacobs W.R. Jr."/>
            <person name="Venter J.C."/>
            <person name="Fraser C.M."/>
        </authorList>
    </citation>
    <scope>NUCLEOTIDE SEQUENCE [LARGE SCALE GENOMIC DNA]</scope>
    <source>
        <strain>CDC 1551 / Oshkosh</strain>
    </source>
</reference>
<name>LAT_MYCTO</name>
<organism>
    <name type="scientific">Mycobacterium tuberculosis (strain CDC 1551 / Oshkosh)</name>
    <dbReference type="NCBI Taxonomy" id="83331"/>
    <lineage>
        <taxon>Bacteria</taxon>
        <taxon>Bacillati</taxon>
        <taxon>Actinomycetota</taxon>
        <taxon>Actinomycetes</taxon>
        <taxon>Mycobacteriales</taxon>
        <taxon>Mycobacteriaceae</taxon>
        <taxon>Mycobacterium</taxon>
        <taxon>Mycobacterium tuberculosis complex</taxon>
    </lineage>
</organism>
<protein>
    <recommendedName>
        <fullName evidence="1">L-lysine-epsilon aminotransferase</fullName>
        <shortName evidence="1">L-lysine aminotransferase</shortName>
        <shortName evidence="1">LAT</shortName>
        <ecNumber evidence="1">2.6.1.36</ecNumber>
    </recommendedName>
    <alternativeName>
        <fullName evidence="1">Lysine 6-aminotransferase</fullName>
    </alternativeName>
</protein>
<proteinExistence type="inferred from homology"/>
<sequence>MAAVVKSVALAGRPTTPDRVHEVLGRSMLVDGLDIVLDLTRSGGSYLVDAITGRRYLDMFTFVASSALGMNPPALVDDREFHAELMQAALNKPSNSDVYSVAMARFVETFARVLGDPALPHLFFVEGGALAVENALKAAFDWKSRHNQAHGIDPALGTQVLHLRGAFHGRSGYTLSLTNTKPTITARFPKFDWPRIDAPYMRPGLDEPAMAALEAEALRQARAAFETRPHDIACFVAEPIQGEGGDRHFRPEFFAAMRELCDEFDALLIFDEVQTGCGLTGTAWAYQQLDVAPDIVAFGKKTQVCGVMAGRRVDEVADNVFAVPSRLNSTWGGNLTDMVRARRILEVIEAEGLFERAVQHGKYLRARLDELAADFPAVVLDPRGRGLMCAFSLPTTADRDELIRQLWQRAVIVLPAGADTVRFRPPLTVSTAEIDAAIAAVRSALPVVT</sequence>